<gene>
    <name evidence="1" type="primary">rpsQ</name>
    <name type="ordered locus">Teth514_0876</name>
</gene>
<reference key="1">
    <citation type="submission" date="2008-01" db="EMBL/GenBank/DDBJ databases">
        <title>Complete sequence of Thermoanaerobacter sp. X514.</title>
        <authorList>
            <consortium name="US DOE Joint Genome Institute"/>
            <person name="Copeland A."/>
            <person name="Lucas S."/>
            <person name="Lapidus A."/>
            <person name="Barry K."/>
            <person name="Glavina del Rio T."/>
            <person name="Dalin E."/>
            <person name="Tice H."/>
            <person name="Pitluck S."/>
            <person name="Bruce D."/>
            <person name="Goodwin L."/>
            <person name="Saunders E."/>
            <person name="Brettin T."/>
            <person name="Detter J.C."/>
            <person name="Han C."/>
            <person name="Schmutz J."/>
            <person name="Larimer F."/>
            <person name="Land M."/>
            <person name="Hauser L."/>
            <person name="Kyrpides N."/>
            <person name="Kim E."/>
            <person name="Hemme C."/>
            <person name="Fields M.W."/>
            <person name="He Z."/>
            <person name="Zhou J."/>
            <person name="Richardson P."/>
        </authorList>
    </citation>
    <scope>NUCLEOTIDE SEQUENCE [LARGE SCALE GENOMIC DNA]</scope>
    <source>
        <strain>X514</strain>
    </source>
</reference>
<sequence>MERGYRKVRIGTVVSNKMQKTIVVAVEDRVRHPLYGKTIKRTKKFKVHDENNVCNVGDIVKIMETRPLSKEKRWRLVEIVKRAE</sequence>
<organism>
    <name type="scientific">Thermoanaerobacter sp. (strain X514)</name>
    <dbReference type="NCBI Taxonomy" id="399726"/>
    <lineage>
        <taxon>Bacteria</taxon>
        <taxon>Bacillati</taxon>
        <taxon>Bacillota</taxon>
        <taxon>Clostridia</taxon>
        <taxon>Thermoanaerobacterales</taxon>
        <taxon>Thermoanaerobacteraceae</taxon>
        <taxon>Thermoanaerobacter</taxon>
    </lineage>
</organism>
<keyword id="KW-0687">Ribonucleoprotein</keyword>
<keyword id="KW-0689">Ribosomal protein</keyword>
<keyword id="KW-0694">RNA-binding</keyword>
<keyword id="KW-0699">rRNA-binding</keyword>
<comment type="function">
    <text evidence="1">One of the primary rRNA binding proteins, it binds specifically to the 5'-end of 16S ribosomal RNA.</text>
</comment>
<comment type="subunit">
    <text evidence="1">Part of the 30S ribosomal subunit.</text>
</comment>
<comment type="similarity">
    <text evidence="1">Belongs to the universal ribosomal protein uS17 family.</text>
</comment>
<dbReference type="EMBL" id="CP000923">
    <property type="protein sequence ID" value="ABY92178.1"/>
    <property type="molecule type" value="Genomic_DNA"/>
</dbReference>
<dbReference type="RefSeq" id="WP_003868569.1">
    <property type="nucleotide sequence ID" value="NC_010320.1"/>
</dbReference>
<dbReference type="SMR" id="B0K5Q2"/>
<dbReference type="KEGG" id="tex:Teth514_0876"/>
<dbReference type="HOGENOM" id="CLU_073626_1_0_9"/>
<dbReference type="Proteomes" id="UP000002155">
    <property type="component" value="Chromosome"/>
</dbReference>
<dbReference type="GO" id="GO:0022627">
    <property type="term" value="C:cytosolic small ribosomal subunit"/>
    <property type="evidence" value="ECO:0007669"/>
    <property type="project" value="TreeGrafter"/>
</dbReference>
<dbReference type="GO" id="GO:0019843">
    <property type="term" value="F:rRNA binding"/>
    <property type="evidence" value="ECO:0007669"/>
    <property type="project" value="UniProtKB-UniRule"/>
</dbReference>
<dbReference type="GO" id="GO:0003735">
    <property type="term" value="F:structural constituent of ribosome"/>
    <property type="evidence" value="ECO:0007669"/>
    <property type="project" value="InterPro"/>
</dbReference>
<dbReference type="GO" id="GO:0006412">
    <property type="term" value="P:translation"/>
    <property type="evidence" value="ECO:0007669"/>
    <property type="project" value="UniProtKB-UniRule"/>
</dbReference>
<dbReference type="CDD" id="cd00364">
    <property type="entry name" value="Ribosomal_uS17"/>
    <property type="match status" value="1"/>
</dbReference>
<dbReference type="FunFam" id="2.40.50.140:FF:000123">
    <property type="entry name" value="30S ribosomal protein S17"/>
    <property type="match status" value="1"/>
</dbReference>
<dbReference type="Gene3D" id="2.40.50.140">
    <property type="entry name" value="Nucleic acid-binding proteins"/>
    <property type="match status" value="1"/>
</dbReference>
<dbReference type="HAMAP" id="MF_01345_B">
    <property type="entry name" value="Ribosomal_uS17_B"/>
    <property type="match status" value="1"/>
</dbReference>
<dbReference type="InterPro" id="IPR012340">
    <property type="entry name" value="NA-bd_OB-fold"/>
</dbReference>
<dbReference type="InterPro" id="IPR000266">
    <property type="entry name" value="Ribosomal_uS17"/>
</dbReference>
<dbReference type="InterPro" id="IPR019984">
    <property type="entry name" value="Ribosomal_uS17_bact/chlr"/>
</dbReference>
<dbReference type="InterPro" id="IPR019979">
    <property type="entry name" value="Ribosomal_uS17_CS"/>
</dbReference>
<dbReference type="NCBIfam" id="NF004123">
    <property type="entry name" value="PRK05610.1"/>
    <property type="match status" value="1"/>
</dbReference>
<dbReference type="NCBIfam" id="TIGR03635">
    <property type="entry name" value="uS17_bact"/>
    <property type="match status" value="1"/>
</dbReference>
<dbReference type="PANTHER" id="PTHR10744">
    <property type="entry name" value="40S RIBOSOMAL PROTEIN S11 FAMILY MEMBER"/>
    <property type="match status" value="1"/>
</dbReference>
<dbReference type="PANTHER" id="PTHR10744:SF1">
    <property type="entry name" value="SMALL RIBOSOMAL SUBUNIT PROTEIN US17M"/>
    <property type="match status" value="1"/>
</dbReference>
<dbReference type="Pfam" id="PF00366">
    <property type="entry name" value="Ribosomal_S17"/>
    <property type="match status" value="1"/>
</dbReference>
<dbReference type="PRINTS" id="PR00973">
    <property type="entry name" value="RIBOSOMALS17"/>
</dbReference>
<dbReference type="SUPFAM" id="SSF50249">
    <property type="entry name" value="Nucleic acid-binding proteins"/>
    <property type="match status" value="1"/>
</dbReference>
<dbReference type="PROSITE" id="PS00056">
    <property type="entry name" value="RIBOSOMAL_S17"/>
    <property type="match status" value="1"/>
</dbReference>
<protein>
    <recommendedName>
        <fullName evidence="1">Small ribosomal subunit protein uS17</fullName>
    </recommendedName>
    <alternativeName>
        <fullName evidence="2">30S ribosomal protein S17</fullName>
    </alternativeName>
</protein>
<evidence type="ECO:0000255" key="1">
    <source>
        <dbReference type="HAMAP-Rule" id="MF_01345"/>
    </source>
</evidence>
<evidence type="ECO:0000305" key="2"/>
<name>RS17_THEPX</name>
<feature type="chain" id="PRO_1000143316" description="Small ribosomal subunit protein uS17">
    <location>
        <begin position="1"/>
        <end position="84"/>
    </location>
</feature>
<accession>B0K5Q2</accession>
<proteinExistence type="inferred from homology"/>